<comment type="function">
    <text evidence="3">Catalyzes the hydrolysis of xylo-oligomers to xylose units and plays an important role in xylan degradation. Can also perform the transglycosylation of xylose and alcohol. Has no endoglucanase activity.</text>
</comment>
<comment type="catalytic activity">
    <reaction evidence="3">
        <text>Hydrolysis of (1-&gt;4)-beta-D-xylans, to remove successive D-xylose residues from the non-reducing termini.</text>
        <dbReference type="EC" id="3.2.1.37"/>
    </reaction>
</comment>
<comment type="biophysicochemical properties">
    <phDependence>
        <text evidence="3">Optimum pH is 5.5. Stable from pH 3 to pH 8.</text>
    </phDependence>
    <temperatureDependence>
        <text evidence="3">Optimum temperature is 50 degrees Celsius.</text>
    </temperatureDependence>
</comment>
<comment type="subcellular location">
    <subcellularLocation>
        <location evidence="6">Secreted</location>
    </subcellularLocation>
</comment>
<comment type="similarity">
    <text evidence="5">Belongs to the glycosyl hydrolase 5 (cellulase A) family.</text>
</comment>
<keyword id="KW-0325">Glycoprotein</keyword>
<keyword id="KW-0326">Glycosidase</keyword>
<keyword id="KW-0378">Hydrolase</keyword>
<keyword id="KW-0964">Secreted</keyword>
<accession>W8QRE4</accession>
<sequence length="476" mass="55475">MAYLKVSGTKIVDKDGNEVILRGAGLGGWMNMENFITGYPGCEFQIRAALADVVGQEKSEFFFDKFLEYFFTDADAAFFKSLGLNCIRLPFNYRHFEDDMNPRVLKPEGFKHLDRVIDICAKHGIYTVLDLHTAPGGQNTDWHSDAGTHIAKFWEHKDFQDRVIWLWEELAQHYRDNTWIAGYNPLNEPTDPYQTRLIAWYDRVYAAIRKHDPHHALFLDGNTFASDFSHFGDAEKRWENTAYAIHDYSVFGFPAAPEPYVSSEAQRRRLRRSYEKKREWMDARGLCVWNGEFGPVYARREYEGDLTDSINEERYRVLKDQLEIYNKDRLSWSIWLYKDIGFQGMVHVSRDTPYMTLFRDFLAKKHRLAIDAWGADDSAVRHVYQPLIDLIKQEVKPEHQELYPAPVWKLSDRVGRLARNILVSEFLVREWAEHFRGKSTEELDAIAKSFAFENCLHRDGLNKVLTDNASLVAQGA</sequence>
<feature type="chain" id="PRO_0000438825" description="Beta-xylosidase">
    <location>
        <begin position="1"/>
        <end position="476"/>
    </location>
</feature>
<feature type="active site" description="Proton donor" evidence="1">
    <location>
        <position position="188"/>
    </location>
</feature>
<feature type="active site" description="Nucleophile" evidence="1">
    <location>
        <position position="292"/>
    </location>
</feature>
<feature type="glycosylation site" description="N-linked (GlcNAc...) asparagine" evidence="2">
    <location>
        <position position="468"/>
    </location>
</feature>
<organism>
    <name type="scientific">Phanerodontia chrysosporium</name>
    <name type="common">White-rot fungus</name>
    <name type="synonym">Sporotrichum pruinosum</name>
    <dbReference type="NCBI Taxonomy" id="2822231"/>
    <lineage>
        <taxon>Eukaryota</taxon>
        <taxon>Fungi</taxon>
        <taxon>Dikarya</taxon>
        <taxon>Basidiomycota</taxon>
        <taxon>Agaricomycotina</taxon>
        <taxon>Agaricomycetes</taxon>
        <taxon>Polyporales</taxon>
        <taxon>Phanerochaetaceae</taxon>
        <taxon>Phanerodontia</taxon>
    </lineage>
</organism>
<gene>
    <name evidence="4" type="primary">Xyl5</name>
</gene>
<name>XYL5_PHACH</name>
<reference key="1">
    <citation type="journal article" date="2015" name="J. Biosci. Bioeng.">
        <title>Putative endoglucanase PcGH5 from Phanerochaete chrysosporium is a beta-xylosidase that cleaves xylans in synergistic action with endo-xylanase.</title>
        <authorList>
            <person name="Huy N.D."/>
            <person name="Nguyen C.L."/>
            <person name="Seo J.W."/>
            <person name="Kim D.H."/>
            <person name="Park S.M."/>
        </authorList>
    </citation>
    <scope>NUCLEOTIDE SEQUENCE [MRNA]</scope>
    <scope>FUNCTION</scope>
    <scope>CATALYTIC ACTIVITY</scope>
    <scope>BIOPHYSICOCHEMICAL PROPERTIES</scope>
    <source>
        <strain>ATCC 24725 / DSM 6909 / CBS 481.73 / BCRC 36200 / NRRL 6361 / VKM F-1767</strain>
    </source>
</reference>
<evidence type="ECO:0000250" key="1">
    <source>
        <dbReference type="UniProtKB" id="Q45070"/>
    </source>
</evidence>
<evidence type="ECO:0000255" key="2">
    <source>
        <dbReference type="PROSITE-ProRule" id="PRU00498"/>
    </source>
</evidence>
<evidence type="ECO:0000269" key="3">
    <source>
    </source>
</evidence>
<evidence type="ECO:0000303" key="4">
    <source>
    </source>
</evidence>
<evidence type="ECO:0000305" key="5"/>
<evidence type="ECO:0000305" key="6">
    <source>
    </source>
</evidence>
<proteinExistence type="evidence at protein level"/>
<dbReference type="EC" id="3.2.1.37" evidence="3"/>
<dbReference type="EMBL" id="KF977410">
    <property type="protein sequence ID" value="AHL69750.2"/>
    <property type="molecule type" value="mRNA"/>
</dbReference>
<dbReference type="EMBL" id="KJ624721">
    <property type="protein sequence ID" value="AIA81045.1"/>
    <property type="molecule type" value="mRNA"/>
</dbReference>
<dbReference type="SMR" id="W8QRE4"/>
<dbReference type="GlyCosmos" id="W8QRE4">
    <property type="glycosylation" value="1 site, No reported glycans"/>
</dbReference>
<dbReference type="VEuPathDB" id="FungiDB:AGR57_14021"/>
<dbReference type="BRENDA" id="3.2.1.37">
    <property type="organism ID" value="1380"/>
</dbReference>
<dbReference type="GO" id="GO:0009986">
    <property type="term" value="C:cell surface"/>
    <property type="evidence" value="ECO:0007669"/>
    <property type="project" value="TreeGrafter"/>
</dbReference>
<dbReference type="GO" id="GO:0005576">
    <property type="term" value="C:extracellular region"/>
    <property type="evidence" value="ECO:0007669"/>
    <property type="project" value="UniProtKB-SubCell"/>
</dbReference>
<dbReference type="GO" id="GO:0008422">
    <property type="term" value="F:beta-glucosidase activity"/>
    <property type="evidence" value="ECO:0007669"/>
    <property type="project" value="TreeGrafter"/>
</dbReference>
<dbReference type="GO" id="GO:0009044">
    <property type="term" value="F:xylan 1,4-beta-xylosidase activity"/>
    <property type="evidence" value="ECO:0007669"/>
    <property type="project" value="UniProtKB-EC"/>
</dbReference>
<dbReference type="GO" id="GO:0009251">
    <property type="term" value="P:glucan catabolic process"/>
    <property type="evidence" value="ECO:0007669"/>
    <property type="project" value="TreeGrafter"/>
</dbReference>
<dbReference type="FunFam" id="3.20.20.80:FF:000130">
    <property type="entry name" value="Endoglucanase C"/>
    <property type="match status" value="1"/>
</dbReference>
<dbReference type="Gene3D" id="3.20.20.80">
    <property type="entry name" value="Glycosidases"/>
    <property type="match status" value="1"/>
</dbReference>
<dbReference type="InterPro" id="IPR001547">
    <property type="entry name" value="Glyco_hydro_5"/>
</dbReference>
<dbReference type="InterPro" id="IPR017853">
    <property type="entry name" value="Glycoside_hydrolase_SF"/>
</dbReference>
<dbReference type="InterPro" id="IPR050386">
    <property type="entry name" value="Glycosyl_hydrolase_5"/>
</dbReference>
<dbReference type="PANTHER" id="PTHR31297">
    <property type="entry name" value="GLUCAN ENDO-1,6-BETA-GLUCOSIDASE B"/>
    <property type="match status" value="1"/>
</dbReference>
<dbReference type="PANTHER" id="PTHR31297:SF13">
    <property type="entry name" value="PUTATIVE-RELATED"/>
    <property type="match status" value="1"/>
</dbReference>
<dbReference type="Pfam" id="PF00150">
    <property type="entry name" value="Cellulase"/>
    <property type="match status" value="1"/>
</dbReference>
<dbReference type="SUPFAM" id="SSF51445">
    <property type="entry name" value="(Trans)glycosidases"/>
    <property type="match status" value="1"/>
</dbReference>
<protein>
    <recommendedName>
        <fullName evidence="4">Beta-xylosidase</fullName>
        <ecNumber evidence="3">3.2.1.37</ecNumber>
    </recommendedName>
    <alternativeName>
        <fullName>1,4-beta-D-xylan xylohydrolase</fullName>
    </alternativeName>
    <alternativeName>
        <fullName>Xylan 1,4-beta-xylosidase</fullName>
    </alternativeName>
</protein>